<evidence type="ECO:0000255" key="1">
    <source>
        <dbReference type="HAMAP-Rule" id="MF_02012"/>
    </source>
</evidence>
<organism>
    <name type="scientific">Salmonella typhi</name>
    <dbReference type="NCBI Taxonomy" id="90370"/>
    <lineage>
        <taxon>Bacteria</taxon>
        <taxon>Pseudomonadati</taxon>
        <taxon>Pseudomonadota</taxon>
        <taxon>Gammaproteobacteria</taxon>
        <taxon>Enterobacterales</taxon>
        <taxon>Enterobacteriaceae</taxon>
        <taxon>Salmonella</taxon>
    </lineage>
</organism>
<gene>
    <name evidence="1" type="primary">zapA</name>
    <name type="ordered locus">STY3216</name>
    <name type="ordered locus">t2978</name>
</gene>
<feature type="chain" id="PRO_0000345657" description="Cell division protein ZapA">
    <location>
        <begin position="1"/>
        <end position="109"/>
    </location>
</feature>
<feature type="coiled-coil region" evidence="1">
    <location>
        <begin position="21"/>
        <end position="97"/>
    </location>
</feature>
<name>ZAPA_SALTI</name>
<sequence length="109" mass="12523">MSAQPVDIQIFGRSLRVNCPPDQRDALNQAADDLNQRLQDLKVRTRVTNTEQLVFIAALNISYELTQEKAKTRDYAASMEQRIRMLQQTIEQALLDQGRITEKTGQNFE</sequence>
<keyword id="KW-0131">Cell cycle</keyword>
<keyword id="KW-0132">Cell division</keyword>
<keyword id="KW-0175">Coiled coil</keyword>
<keyword id="KW-0963">Cytoplasm</keyword>
<keyword id="KW-0717">Septation</keyword>
<reference key="1">
    <citation type="journal article" date="2003" name="J. Bacteriol.">
        <title>Comparative genomics of Salmonella enterica serovar Typhi strains Ty2 and CT18.</title>
        <authorList>
            <person name="Deng W."/>
            <person name="Liou S.-R."/>
            <person name="Plunkett G. III"/>
            <person name="Mayhew G.F."/>
            <person name="Rose D.J."/>
            <person name="Burland V."/>
            <person name="Kodoyianni V."/>
            <person name="Schwartz D.C."/>
            <person name="Blattner F.R."/>
        </authorList>
    </citation>
    <scope>NUCLEOTIDE SEQUENCE [LARGE SCALE GENOMIC DNA]</scope>
    <source>
        <strain>ATCC 700931 / Ty2</strain>
    </source>
</reference>
<reference key="2">
    <citation type="journal article" date="2001" name="Nature">
        <title>Complete genome sequence of a multiple drug resistant Salmonella enterica serovar Typhi CT18.</title>
        <authorList>
            <person name="Parkhill J."/>
            <person name="Dougan G."/>
            <person name="James K.D."/>
            <person name="Thomson N.R."/>
            <person name="Pickard D."/>
            <person name="Wain J."/>
            <person name="Churcher C.M."/>
            <person name="Mungall K.L."/>
            <person name="Bentley S.D."/>
            <person name="Holden M.T.G."/>
            <person name="Sebaihia M."/>
            <person name="Baker S."/>
            <person name="Basham D."/>
            <person name="Brooks K."/>
            <person name="Chillingworth T."/>
            <person name="Connerton P."/>
            <person name="Cronin A."/>
            <person name="Davis P."/>
            <person name="Davies R.M."/>
            <person name="Dowd L."/>
            <person name="White N."/>
            <person name="Farrar J."/>
            <person name="Feltwell T."/>
            <person name="Hamlin N."/>
            <person name="Haque A."/>
            <person name="Hien T.T."/>
            <person name="Holroyd S."/>
            <person name="Jagels K."/>
            <person name="Krogh A."/>
            <person name="Larsen T.S."/>
            <person name="Leather S."/>
            <person name="Moule S."/>
            <person name="O'Gaora P."/>
            <person name="Parry C."/>
            <person name="Quail M.A."/>
            <person name="Rutherford K.M."/>
            <person name="Simmonds M."/>
            <person name="Skelton J."/>
            <person name="Stevens K."/>
            <person name="Whitehead S."/>
            <person name="Barrell B.G."/>
        </authorList>
    </citation>
    <scope>NUCLEOTIDE SEQUENCE [LARGE SCALE GENOMIC DNA]</scope>
    <source>
        <strain>CT18</strain>
    </source>
</reference>
<dbReference type="EMBL" id="AE014613">
    <property type="protein sequence ID" value="AAO70530.1"/>
    <property type="molecule type" value="Genomic_DNA"/>
</dbReference>
<dbReference type="EMBL" id="AL513382">
    <property type="protein sequence ID" value="CAD02890.1"/>
    <property type="molecule type" value="Genomic_DNA"/>
</dbReference>
<dbReference type="RefSeq" id="NP_457458.1">
    <property type="nucleotide sequence ID" value="NC_003198.1"/>
</dbReference>
<dbReference type="RefSeq" id="WP_001276011.1">
    <property type="nucleotide sequence ID" value="NZ_WSUR01000024.1"/>
</dbReference>
<dbReference type="SMR" id="Q8XGR5"/>
<dbReference type="STRING" id="220341.gene:17587091"/>
<dbReference type="GeneID" id="66757358"/>
<dbReference type="KEGG" id="stt:t2978"/>
<dbReference type="KEGG" id="sty:STY3216"/>
<dbReference type="PATRIC" id="fig|220341.7.peg.3277"/>
<dbReference type="eggNOG" id="COG3027">
    <property type="taxonomic scope" value="Bacteria"/>
</dbReference>
<dbReference type="HOGENOM" id="CLU_116623_3_0_6"/>
<dbReference type="OMA" id="NICYELH"/>
<dbReference type="OrthoDB" id="5917174at2"/>
<dbReference type="Proteomes" id="UP000000541">
    <property type="component" value="Chromosome"/>
</dbReference>
<dbReference type="Proteomes" id="UP000002670">
    <property type="component" value="Chromosome"/>
</dbReference>
<dbReference type="GO" id="GO:0032153">
    <property type="term" value="C:cell division site"/>
    <property type="evidence" value="ECO:0007669"/>
    <property type="project" value="TreeGrafter"/>
</dbReference>
<dbReference type="GO" id="GO:0030428">
    <property type="term" value="C:cell septum"/>
    <property type="evidence" value="ECO:0007669"/>
    <property type="project" value="TreeGrafter"/>
</dbReference>
<dbReference type="GO" id="GO:0005829">
    <property type="term" value="C:cytosol"/>
    <property type="evidence" value="ECO:0007669"/>
    <property type="project" value="TreeGrafter"/>
</dbReference>
<dbReference type="GO" id="GO:0005886">
    <property type="term" value="C:plasma membrane"/>
    <property type="evidence" value="ECO:0007669"/>
    <property type="project" value="UniProtKB-UniRule"/>
</dbReference>
<dbReference type="GO" id="GO:0000917">
    <property type="term" value="P:division septum assembly"/>
    <property type="evidence" value="ECO:0007669"/>
    <property type="project" value="UniProtKB-KW"/>
</dbReference>
<dbReference type="GO" id="GO:0043093">
    <property type="term" value="P:FtsZ-dependent cytokinesis"/>
    <property type="evidence" value="ECO:0007669"/>
    <property type="project" value="TreeGrafter"/>
</dbReference>
<dbReference type="GO" id="GO:0000921">
    <property type="term" value="P:septin ring assembly"/>
    <property type="evidence" value="ECO:0007669"/>
    <property type="project" value="TreeGrafter"/>
</dbReference>
<dbReference type="FunFam" id="1.20.5.50:FF:000001">
    <property type="entry name" value="Cell division protein ZapA"/>
    <property type="match status" value="1"/>
</dbReference>
<dbReference type="FunFam" id="3.30.160.880:FF:000001">
    <property type="entry name" value="Cell division protein ZapA"/>
    <property type="match status" value="1"/>
</dbReference>
<dbReference type="Gene3D" id="1.20.5.50">
    <property type="match status" value="1"/>
</dbReference>
<dbReference type="Gene3D" id="3.30.160.880">
    <property type="entry name" value="Cell division protein ZapA protomer, N-terminal domain"/>
    <property type="match status" value="1"/>
</dbReference>
<dbReference type="HAMAP" id="MF_02012">
    <property type="entry name" value="ZapA_type1"/>
    <property type="match status" value="1"/>
</dbReference>
<dbReference type="InterPro" id="IPR007838">
    <property type="entry name" value="Cell_div_ZapA-like"/>
</dbReference>
<dbReference type="InterPro" id="IPR036192">
    <property type="entry name" value="Cell_div_ZapA-like_sf"/>
</dbReference>
<dbReference type="InterPro" id="IPR023771">
    <property type="entry name" value="Cell_div_ZapA_eubact"/>
</dbReference>
<dbReference type="InterPro" id="IPR042233">
    <property type="entry name" value="Cell_div_ZapA_N"/>
</dbReference>
<dbReference type="NCBIfam" id="NF008209">
    <property type="entry name" value="PRK10972.1"/>
    <property type="match status" value="1"/>
</dbReference>
<dbReference type="PANTHER" id="PTHR34981">
    <property type="entry name" value="CELL DIVISION PROTEIN ZAPA"/>
    <property type="match status" value="1"/>
</dbReference>
<dbReference type="PANTHER" id="PTHR34981:SF1">
    <property type="entry name" value="CELL DIVISION PROTEIN ZAPA"/>
    <property type="match status" value="1"/>
</dbReference>
<dbReference type="Pfam" id="PF05164">
    <property type="entry name" value="ZapA"/>
    <property type="match status" value="1"/>
</dbReference>
<dbReference type="SUPFAM" id="SSF102829">
    <property type="entry name" value="Cell division protein ZapA-like"/>
    <property type="match status" value="1"/>
</dbReference>
<proteinExistence type="inferred from homology"/>
<protein>
    <recommendedName>
        <fullName evidence="1">Cell division protein ZapA</fullName>
    </recommendedName>
    <alternativeName>
        <fullName evidence="1">Z ring-associated protein ZapA</fullName>
    </alternativeName>
</protein>
<comment type="function">
    <text evidence="1">Activator of cell division through the inhibition of FtsZ GTPase activity, therefore promoting FtsZ assembly into bundles of protofilaments necessary for the formation of the division Z ring. It is recruited early at mid-cell but it is not essential for cell division.</text>
</comment>
<comment type="subunit">
    <text evidence="1">Homodimer. Interacts with FtsZ.</text>
</comment>
<comment type="subcellular location">
    <subcellularLocation>
        <location evidence="1">Cytoplasm</location>
    </subcellularLocation>
    <text evidence="1">Localizes at mid-cell.</text>
</comment>
<comment type="similarity">
    <text evidence="1">Belongs to the ZapA family. Type 1 subfamily.</text>
</comment>
<accession>Q8XGR5</accession>
<accession>Q7AMB9</accession>